<comment type="function">
    <text evidence="1">Catalyzes the attachment of threonine to tRNA(Thr) in a two-step reaction: L-threonine is first activated by ATP to form Thr-AMP and then transferred to the acceptor end of tRNA(Thr). Also edits incorrectly charged L-seryl-tRNA(Thr).</text>
</comment>
<comment type="catalytic activity">
    <reaction evidence="1">
        <text>tRNA(Thr) + L-threonine + ATP = L-threonyl-tRNA(Thr) + AMP + diphosphate + H(+)</text>
        <dbReference type="Rhea" id="RHEA:24624"/>
        <dbReference type="Rhea" id="RHEA-COMP:9670"/>
        <dbReference type="Rhea" id="RHEA-COMP:9704"/>
        <dbReference type="ChEBI" id="CHEBI:15378"/>
        <dbReference type="ChEBI" id="CHEBI:30616"/>
        <dbReference type="ChEBI" id="CHEBI:33019"/>
        <dbReference type="ChEBI" id="CHEBI:57926"/>
        <dbReference type="ChEBI" id="CHEBI:78442"/>
        <dbReference type="ChEBI" id="CHEBI:78534"/>
        <dbReference type="ChEBI" id="CHEBI:456215"/>
        <dbReference type="EC" id="6.1.1.3"/>
    </reaction>
</comment>
<comment type="cofactor">
    <cofactor evidence="1">
        <name>Zn(2+)</name>
        <dbReference type="ChEBI" id="CHEBI:29105"/>
    </cofactor>
    <text evidence="1">Binds 1 zinc ion per subunit.</text>
</comment>
<comment type="subunit">
    <text evidence="1">Homodimer.</text>
</comment>
<comment type="subcellular location">
    <subcellularLocation>
        <location evidence="1">Cytoplasm</location>
    </subcellularLocation>
</comment>
<comment type="similarity">
    <text evidence="1">Belongs to the class-II aminoacyl-tRNA synthetase family.</text>
</comment>
<evidence type="ECO:0000255" key="1">
    <source>
        <dbReference type="HAMAP-Rule" id="MF_00184"/>
    </source>
</evidence>
<evidence type="ECO:0000255" key="2">
    <source>
        <dbReference type="PROSITE-ProRule" id="PRU01228"/>
    </source>
</evidence>
<keyword id="KW-0030">Aminoacyl-tRNA synthetase</keyword>
<keyword id="KW-0067">ATP-binding</keyword>
<keyword id="KW-0963">Cytoplasm</keyword>
<keyword id="KW-0436">Ligase</keyword>
<keyword id="KW-0479">Metal-binding</keyword>
<keyword id="KW-0547">Nucleotide-binding</keyword>
<keyword id="KW-0648">Protein biosynthesis</keyword>
<keyword id="KW-0694">RNA-binding</keyword>
<keyword id="KW-0820">tRNA-binding</keyword>
<keyword id="KW-0862">Zinc</keyword>
<sequence length="640" mass="73224">MKITFPDGAVKEFEPGVSTADIAASISPGLKKKALAGKLNGELLDLVTPIHEDGAIEIVTPDHEDALGILRHSTAHLMAQALKRLYPDVKFGVGPAIESGFYYDIDTEAVISDESLVEIEKEMQKIVRENVPIEREVVSREEAIKRFKAIGDQYKLELIEAIPEDETVTIYTQGEFFDLCRGVHVPSTGKIQVFKLLSVAGAYWRGDSNNKMLQRIYGTAFFDKNGLKEFIQMQKEAKERDHRKLGKELDLFANSIEVGQGLPLWLPKGATIRRVIERYIVDKEERLGYNHVYTPIMANVELYKTSGHWDHYHEDMFPTMKMDNEELVLRPMNCPHHMMIYKNDIHSYRELPIRIAELGMMHRYEMSGALSGLQRVRGMTLNDAHVFVRPDQIKDEFKRVVELILEVYKDFDIKDYSFRLSYRDPKNTEKYFDDDAMWEKAQAMLKSAMDEMEMDYFEAEGEAAFYGPKLDVQVKTAIGKEETLSTVQLDFLLPERFDLTYIGEDGEKHRPVVIHRGVVSTMERFVAYLIEEYKGAFPTWLAPVQMELIPVNADAHLDYAKGVQDKLQRAGLRAEVDDRNEKLGYKIREAQTKKIPYALVLGDQEVEAGSVNVRRYGSKDSETMDLDAFIAQVVAEVSKY</sequence>
<organism>
    <name type="scientific">Listeria monocytogenes serotype 4b (strain CLIP80459)</name>
    <dbReference type="NCBI Taxonomy" id="568819"/>
    <lineage>
        <taxon>Bacteria</taxon>
        <taxon>Bacillati</taxon>
        <taxon>Bacillota</taxon>
        <taxon>Bacilli</taxon>
        <taxon>Bacillales</taxon>
        <taxon>Listeriaceae</taxon>
        <taxon>Listeria</taxon>
    </lineage>
</organism>
<protein>
    <recommendedName>
        <fullName evidence="1">Threonine--tRNA ligase</fullName>
        <ecNumber evidence="1">6.1.1.3</ecNumber>
    </recommendedName>
    <alternativeName>
        <fullName evidence="1">Threonyl-tRNA synthetase</fullName>
        <shortName evidence="1">ThrRS</shortName>
    </alternativeName>
</protein>
<dbReference type="EC" id="6.1.1.3" evidence="1"/>
<dbReference type="EMBL" id="FM242711">
    <property type="protein sequence ID" value="CAS05331.1"/>
    <property type="molecule type" value="Genomic_DNA"/>
</dbReference>
<dbReference type="RefSeq" id="WP_003725686.1">
    <property type="nucleotide sequence ID" value="NC_012488.1"/>
</dbReference>
<dbReference type="SMR" id="C1KVK6"/>
<dbReference type="KEGG" id="lmc:Lm4b_01570"/>
<dbReference type="HOGENOM" id="CLU_008554_0_1_9"/>
<dbReference type="GO" id="GO:0005737">
    <property type="term" value="C:cytoplasm"/>
    <property type="evidence" value="ECO:0007669"/>
    <property type="project" value="UniProtKB-SubCell"/>
</dbReference>
<dbReference type="GO" id="GO:0005524">
    <property type="term" value="F:ATP binding"/>
    <property type="evidence" value="ECO:0007669"/>
    <property type="project" value="UniProtKB-UniRule"/>
</dbReference>
<dbReference type="GO" id="GO:0140096">
    <property type="term" value="F:catalytic activity, acting on a protein"/>
    <property type="evidence" value="ECO:0007669"/>
    <property type="project" value="UniProtKB-ARBA"/>
</dbReference>
<dbReference type="GO" id="GO:0046872">
    <property type="term" value="F:metal ion binding"/>
    <property type="evidence" value="ECO:0007669"/>
    <property type="project" value="UniProtKB-KW"/>
</dbReference>
<dbReference type="GO" id="GO:0004829">
    <property type="term" value="F:threonine-tRNA ligase activity"/>
    <property type="evidence" value="ECO:0007669"/>
    <property type="project" value="UniProtKB-UniRule"/>
</dbReference>
<dbReference type="GO" id="GO:0016740">
    <property type="term" value="F:transferase activity"/>
    <property type="evidence" value="ECO:0007669"/>
    <property type="project" value="UniProtKB-ARBA"/>
</dbReference>
<dbReference type="GO" id="GO:0000049">
    <property type="term" value="F:tRNA binding"/>
    <property type="evidence" value="ECO:0007669"/>
    <property type="project" value="UniProtKB-KW"/>
</dbReference>
<dbReference type="GO" id="GO:0006435">
    <property type="term" value="P:threonyl-tRNA aminoacylation"/>
    <property type="evidence" value="ECO:0007669"/>
    <property type="project" value="UniProtKB-UniRule"/>
</dbReference>
<dbReference type="CDD" id="cd01667">
    <property type="entry name" value="TGS_ThrRS"/>
    <property type="match status" value="1"/>
</dbReference>
<dbReference type="CDD" id="cd00860">
    <property type="entry name" value="ThrRS_anticodon"/>
    <property type="match status" value="1"/>
</dbReference>
<dbReference type="CDD" id="cd00771">
    <property type="entry name" value="ThrRS_core"/>
    <property type="match status" value="1"/>
</dbReference>
<dbReference type="FunFam" id="3.10.20.30:FF:000005">
    <property type="entry name" value="Threonine--tRNA ligase"/>
    <property type="match status" value="1"/>
</dbReference>
<dbReference type="FunFam" id="3.30.54.20:FF:000002">
    <property type="entry name" value="Threonine--tRNA ligase"/>
    <property type="match status" value="1"/>
</dbReference>
<dbReference type="FunFam" id="3.30.930.10:FF:000002">
    <property type="entry name" value="Threonine--tRNA ligase"/>
    <property type="match status" value="1"/>
</dbReference>
<dbReference type="FunFam" id="3.40.50.800:FF:000001">
    <property type="entry name" value="Threonine--tRNA ligase"/>
    <property type="match status" value="1"/>
</dbReference>
<dbReference type="FunFam" id="3.30.980.10:FF:000005">
    <property type="entry name" value="Threonyl-tRNA synthetase, mitochondrial"/>
    <property type="match status" value="1"/>
</dbReference>
<dbReference type="Gene3D" id="3.10.20.30">
    <property type="match status" value="1"/>
</dbReference>
<dbReference type="Gene3D" id="3.30.54.20">
    <property type="match status" value="1"/>
</dbReference>
<dbReference type="Gene3D" id="3.40.50.800">
    <property type="entry name" value="Anticodon-binding domain"/>
    <property type="match status" value="1"/>
</dbReference>
<dbReference type="Gene3D" id="3.30.930.10">
    <property type="entry name" value="Bira Bifunctional Protein, Domain 2"/>
    <property type="match status" value="1"/>
</dbReference>
<dbReference type="Gene3D" id="3.30.980.10">
    <property type="entry name" value="Threonyl-trna Synthetase, Chain A, domain 2"/>
    <property type="match status" value="1"/>
</dbReference>
<dbReference type="HAMAP" id="MF_00184">
    <property type="entry name" value="Thr_tRNA_synth"/>
    <property type="match status" value="1"/>
</dbReference>
<dbReference type="InterPro" id="IPR002314">
    <property type="entry name" value="aa-tRNA-synt_IIb"/>
</dbReference>
<dbReference type="InterPro" id="IPR006195">
    <property type="entry name" value="aa-tRNA-synth_II"/>
</dbReference>
<dbReference type="InterPro" id="IPR045864">
    <property type="entry name" value="aa-tRNA-synth_II/BPL/LPL"/>
</dbReference>
<dbReference type="InterPro" id="IPR004154">
    <property type="entry name" value="Anticodon-bd"/>
</dbReference>
<dbReference type="InterPro" id="IPR036621">
    <property type="entry name" value="Anticodon-bd_dom_sf"/>
</dbReference>
<dbReference type="InterPro" id="IPR012675">
    <property type="entry name" value="Beta-grasp_dom_sf"/>
</dbReference>
<dbReference type="InterPro" id="IPR004095">
    <property type="entry name" value="TGS"/>
</dbReference>
<dbReference type="InterPro" id="IPR012676">
    <property type="entry name" value="TGS-like"/>
</dbReference>
<dbReference type="InterPro" id="IPR002320">
    <property type="entry name" value="Thr-tRNA-ligase_IIa"/>
</dbReference>
<dbReference type="InterPro" id="IPR018163">
    <property type="entry name" value="Thr/Ala-tRNA-synth_IIc_edit"/>
</dbReference>
<dbReference type="InterPro" id="IPR047246">
    <property type="entry name" value="ThrRS_anticodon"/>
</dbReference>
<dbReference type="InterPro" id="IPR033728">
    <property type="entry name" value="ThrRS_core"/>
</dbReference>
<dbReference type="InterPro" id="IPR012947">
    <property type="entry name" value="tRNA_SAD"/>
</dbReference>
<dbReference type="NCBIfam" id="TIGR00418">
    <property type="entry name" value="thrS"/>
    <property type="match status" value="1"/>
</dbReference>
<dbReference type="PANTHER" id="PTHR11451:SF56">
    <property type="entry name" value="THREONINE--TRNA LIGASE 1"/>
    <property type="match status" value="1"/>
</dbReference>
<dbReference type="PANTHER" id="PTHR11451">
    <property type="entry name" value="THREONINE-TRNA LIGASE"/>
    <property type="match status" value="1"/>
</dbReference>
<dbReference type="Pfam" id="PF03129">
    <property type="entry name" value="HGTP_anticodon"/>
    <property type="match status" value="1"/>
</dbReference>
<dbReference type="Pfam" id="PF02824">
    <property type="entry name" value="TGS"/>
    <property type="match status" value="1"/>
</dbReference>
<dbReference type="Pfam" id="PF00587">
    <property type="entry name" value="tRNA-synt_2b"/>
    <property type="match status" value="1"/>
</dbReference>
<dbReference type="Pfam" id="PF07973">
    <property type="entry name" value="tRNA_SAD"/>
    <property type="match status" value="1"/>
</dbReference>
<dbReference type="PRINTS" id="PR01047">
    <property type="entry name" value="TRNASYNTHTHR"/>
</dbReference>
<dbReference type="SMART" id="SM00863">
    <property type="entry name" value="tRNA_SAD"/>
    <property type="match status" value="1"/>
</dbReference>
<dbReference type="SUPFAM" id="SSF52954">
    <property type="entry name" value="Class II aaRS ABD-related"/>
    <property type="match status" value="1"/>
</dbReference>
<dbReference type="SUPFAM" id="SSF55681">
    <property type="entry name" value="Class II aaRS and biotin synthetases"/>
    <property type="match status" value="1"/>
</dbReference>
<dbReference type="SUPFAM" id="SSF81271">
    <property type="entry name" value="TGS-like"/>
    <property type="match status" value="1"/>
</dbReference>
<dbReference type="SUPFAM" id="SSF55186">
    <property type="entry name" value="ThrRS/AlaRS common domain"/>
    <property type="match status" value="1"/>
</dbReference>
<dbReference type="PROSITE" id="PS50862">
    <property type="entry name" value="AA_TRNA_LIGASE_II"/>
    <property type="match status" value="1"/>
</dbReference>
<dbReference type="PROSITE" id="PS51880">
    <property type="entry name" value="TGS"/>
    <property type="match status" value="1"/>
</dbReference>
<accession>C1KVK6</accession>
<reference key="1">
    <citation type="journal article" date="2012" name="BMC Genomics">
        <title>Comparative genomics and transcriptomics of lineages I, II, and III strains of Listeria monocytogenes.</title>
        <authorList>
            <person name="Hain T."/>
            <person name="Ghai R."/>
            <person name="Billion A."/>
            <person name="Kuenne C.T."/>
            <person name="Steinweg C."/>
            <person name="Izar B."/>
            <person name="Mohamed W."/>
            <person name="Mraheil M."/>
            <person name="Domann E."/>
            <person name="Schaffrath S."/>
            <person name="Karst U."/>
            <person name="Goesmann A."/>
            <person name="Oehm S."/>
            <person name="Puhler A."/>
            <person name="Merkl R."/>
            <person name="Vorwerk S."/>
            <person name="Glaser P."/>
            <person name="Garrido P."/>
            <person name="Rusniok C."/>
            <person name="Buchrieser C."/>
            <person name="Goebel W."/>
            <person name="Chakraborty T."/>
        </authorList>
    </citation>
    <scope>NUCLEOTIDE SEQUENCE [LARGE SCALE GENOMIC DNA]</scope>
    <source>
        <strain>CLIP80459</strain>
    </source>
</reference>
<proteinExistence type="inferred from homology"/>
<gene>
    <name evidence="1" type="primary">thrS</name>
    <name type="ordered locus">Lm4b_01570</name>
</gene>
<feature type="chain" id="PRO_1000203910" description="Threonine--tRNA ligase">
    <location>
        <begin position="1"/>
        <end position="640"/>
    </location>
</feature>
<feature type="domain" description="TGS" evidence="2">
    <location>
        <begin position="1"/>
        <end position="60"/>
    </location>
</feature>
<feature type="region of interest" description="Catalytic" evidence="1">
    <location>
        <begin position="241"/>
        <end position="538"/>
    </location>
</feature>
<feature type="binding site" evidence="1">
    <location>
        <position position="334"/>
    </location>
    <ligand>
        <name>Zn(2+)</name>
        <dbReference type="ChEBI" id="CHEBI:29105"/>
    </ligand>
</feature>
<feature type="binding site" evidence="1">
    <location>
        <position position="385"/>
    </location>
    <ligand>
        <name>Zn(2+)</name>
        <dbReference type="ChEBI" id="CHEBI:29105"/>
    </ligand>
</feature>
<feature type="binding site" evidence="1">
    <location>
        <position position="515"/>
    </location>
    <ligand>
        <name>Zn(2+)</name>
        <dbReference type="ChEBI" id="CHEBI:29105"/>
    </ligand>
</feature>
<name>SYT_LISMC</name>